<accession>B3E9W8</accession>
<gene>
    <name evidence="1" type="primary">nuoB</name>
    <name type="ordered locus">Glov_3137</name>
</gene>
<keyword id="KW-0004">4Fe-4S</keyword>
<keyword id="KW-0997">Cell inner membrane</keyword>
<keyword id="KW-1003">Cell membrane</keyword>
<keyword id="KW-0408">Iron</keyword>
<keyword id="KW-0411">Iron-sulfur</keyword>
<keyword id="KW-0472">Membrane</keyword>
<keyword id="KW-0479">Metal-binding</keyword>
<keyword id="KW-0520">NAD</keyword>
<keyword id="KW-0874">Quinone</keyword>
<keyword id="KW-1185">Reference proteome</keyword>
<keyword id="KW-1278">Translocase</keyword>
<keyword id="KW-0813">Transport</keyword>
<keyword id="KW-0830">Ubiquinone</keyword>
<proteinExistence type="inferred from homology"/>
<organism>
    <name type="scientific">Trichlorobacter lovleyi (strain ATCC BAA-1151 / DSM 17278 / SZ)</name>
    <name type="common">Geobacter lovleyi</name>
    <dbReference type="NCBI Taxonomy" id="398767"/>
    <lineage>
        <taxon>Bacteria</taxon>
        <taxon>Pseudomonadati</taxon>
        <taxon>Thermodesulfobacteriota</taxon>
        <taxon>Desulfuromonadia</taxon>
        <taxon>Geobacterales</taxon>
        <taxon>Geobacteraceae</taxon>
        <taxon>Trichlorobacter</taxon>
    </lineage>
</organism>
<protein>
    <recommendedName>
        <fullName evidence="1">NADH-quinone oxidoreductase subunit B</fullName>
        <ecNumber evidence="1">7.1.1.-</ecNumber>
    </recommendedName>
    <alternativeName>
        <fullName evidence="1">NADH dehydrogenase I subunit B</fullName>
    </alternativeName>
    <alternativeName>
        <fullName evidence="1">NDH-1 subunit B</fullName>
    </alternativeName>
</protein>
<name>NUOB_TRIL1</name>
<feature type="chain" id="PRO_0000376239" description="NADH-quinone oxidoreductase subunit B">
    <location>
        <begin position="1"/>
        <end position="169"/>
    </location>
</feature>
<feature type="binding site" evidence="1">
    <location>
        <position position="37"/>
    </location>
    <ligand>
        <name>[4Fe-4S] cluster</name>
        <dbReference type="ChEBI" id="CHEBI:49883"/>
    </ligand>
</feature>
<feature type="binding site" evidence="1">
    <location>
        <position position="38"/>
    </location>
    <ligand>
        <name>[4Fe-4S] cluster</name>
        <dbReference type="ChEBI" id="CHEBI:49883"/>
    </ligand>
</feature>
<feature type="binding site" evidence="1">
    <location>
        <position position="102"/>
    </location>
    <ligand>
        <name>[4Fe-4S] cluster</name>
        <dbReference type="ChEBI" id="CHEBI:49883"/>
    </ligand>
</feature>
<feature type="binding site" evidence="1">
    <location>
        <position position="131"/>
    </location>
    <ligand>
        <name>[4Fe-4S] cluster</name>
        <dbReference type="ChEBI" id="CHEBI:49883"/>
    </ligand>
</feature>
<dbReference type="EC" id="7.1.1.-" evidence="1"/>
<dbReference type="EMBL" id="CP001089">
    <property type="protein sequence ID" value="ACD96843.1"/>
    <property type="molecule type" value="Genomic_DNA"/>
</dbReference>
<dbReference type="RefSeq" id="WP_012471167.1">
    <property type="nucleotide sequence ID" value="NC_010814.1"/>
</dbReference>
<dbReference type="SMR" id="B3E9W8"/>
<dbReference type="STRING" id="398767.Glov_3137"/>
<dbReference type="KEGG" id="glo:Glov_3137"/>
<dbReference type="eggNOG" id="COG0377">
    <property type="taxonomic scope" value="Bacteria"/>
</dbReference>
<dbReference type="HOGENOM" id="CLU_055737_7_3_7"/>
<dbReference type="OrthoDB" id="9786737at2"/>
<dbReference type="Proteomes" id="UP000002420">
    <property type="component" value="Chromosome"/>
</dbReference>
<dbReference type="GO" id="GO:0005886">
    <property type="term" value="C:plasma membrane"/>
    <property type="evidence" value="ECO:0007669"/>
    <property type="project" value="UniProtKB-SubCell"/>
</dbReference>
<dbReference type="GO" id="GO:0045271">
    <property type="term" value="C:respiratory chain complex I"/>
    <property type="evidence" value="ECO:0007669"/>
    <property type="project" value="TreeGrafter"/>
</dbReference>
<dbReference type="GO" id="GO:0051539">
    <property type="term" value="F:4 iron, 4 sulfur cluster binding"/>
    <property type="evidence" value="ECO:0007669"/>
    <property type="project" value="UniProtKB-KW"/>
</dbReference>
<dbReference type="GO" id="GO:0005506">
    <property type="term" value="F:iron ion binding"/>
    <property type="evidence" value="ECO:0007669"/>
    <property type="project" value="UniProtKB-UniRule"/>
</dbReference>
<dbReference type="GO" id="GO:0008137">
    <property type="term" value="F:NADH dehydrogenase (ubiquinone) activity"/>
    <property type="evidence" value="ECO:0007669"/>
    <property type="project" value="InterPro"/>
</dbReference>
<dbReference type="GO" id="GO:0050136">
    <property type="term" value="F:NADH:ubiquinone reductase (non-electrogenic) activity"/>
    <property type="evidence" value="ECO:0007669"/>
    <property type="project" value="UniProtKB-UniRule"/>
</dbReference>
<dbReference type="GO" id="GO:0048038">
    <property type="term" value="F:quinone binding"/>
    <property type="evidence" value="ECO:0007669"/>
    <property type="project" value="UniProtKB-KW"/>
</dbReference>
<dbReference type="GO" id="GO:0009060">
    <property type="term" value="P:aerobic respiration"/>
    <property type="evidence" value="ECO:0007669"/>
    <property type="project" value="TreeGrafter"/>
</dbReference>
<dbReference type="GO" id="GO:0015990">
    <property type="term" value="P:electron transport coupled proton transport"/>
    <property type="evidence" value="ECO:0007669"/>
    <property type="project" value="TreeGrafter"/>
</dbReference>
<dbReference type="FunFam" id="3.40.50.12280:FF:000002">
    <property type="entry name" value="NADH-quinone oxidoreductase subunit B"/>
    <property type="match status" value="1"/>
</dbReference>
<dbReference type="Gene3D" id="3.40.50.12280">
    <property type="match status" value="1"/>
</dbReference>
<dbReference type="HAMAP" id="MF_01356">
    <property type="entry name" value="NDH1_NuoB"/>
    <property type="match status" value="1"/>
</dbReference>
<dbReference type="InterPro" id="IPR006137">
    <property type="entry name" value="NADH_UbQ_OxRdtase-like_20kDa"/>
</dbReference>
<dbReference type="InterPro" id="IPR006138">
    <property type="entry name" value="NADH_UQ_OxRdtase_20Kd_su"/>
</dbReference>
<dbReference type="NCBIfam" id="TIGR01957">
    <property type="entry name" value="nuoB_fam"/>
    <property type="match status" value="1"/>
</dbReference>
<dbReference type="NCBIfam" id="NF005012">
    <property type="entry name" value="PRK06411.1"/>
    <property type="match status" value="1"/>
</dbReference>
<dbReference type="PANTHER" id="PTHR11995">
    <property type="entry name" value="NADH DEHYDROGENASE"/>
    <property type="match status" value="1"/>
</dbReference>
<dbReference type="PANTHER" id="PTHR11995:SF14">
    <property type="entry name" value="NADH DEHYDROGENASE [UBIQUINONE] IRON-SULFUR PROTEIN 7, MITOCHONDRIAL"/>
    <property type="match status" value="1"/>
</dbReference>
<dbReference type="Pfam" id="PF01058">
    <property type="entry name" value="Oxidored_q6"/>
    <property type="match status" value="1"/>
</dbReference>
<dbReference type="SUPFAM" id="SSF56770">
    <property type="entry name" value="HydA/Nqo6-like"/>
    <property type="match status" value="1"/>
</dbReference>
<reference key="1">
    <citation type="submission" date="2008-05" db="EMBL/GenBank/DDBJ databases">
        <title>Complete sequence of chromosome of Geobacter lovleyi SZ.</title>
        <authorList>
            <consortium name="US DOE Joint Genome Institute"/>
            <person name="Lucas S."/>
            <person name="Copeland A."/>
            <person name="Lapidus A."/>
            <person name="Glavina del Rio T."/>
            <person name="Dalin E."/>
            <person name="Tice H."/>
            <person name="Bruce D."/>
            <person name="Goodwin L."/>
            <person name="Pitluck S."/>
            <person name="Chertkov O."/>
            <person name="Meincke L."/>
            <person name="Brettin T."/>
            <person name="Detter J.C."/>
            <person name="Han C."/>
            <person name="Tapia R."/>
            <person name="Kuske C.R."/>
            <person name="Schmutz J."/>
            <person name="Larimer F."/>
            <person name="Land M."/>
            <person name="Hauser L."/>
            <person name="Kyrpides N."/>
            <person name="Mikhailova N."/>
            <person name="Sung Y."/>
            <person name="Fletcher K.E."/>
            <person name="Ritalahti K.M."/>
            <person name="Loeffler F.E."/>
            <person name="Richardson P."/>
        </authorList>
    </citation>
    <scope>NUCLEOTIDE SEQUENCE [LARGE SCALE GENOMIC DNA]</scope>
    <source>
        <strain>ATCC BAA-1151 / DSM 17278 / SZ</strain>
    </source>
</reference>
<comment type="function">
    <text evidence="1">NDH-1 shuttles electrons from NADH, via FMN and iron-sulfur (Fe-S) centers, to quinones in the respiratory chain. The immediate electron acceptor for the enzyme in this species is believed to be ubiquinone. Couples the redox reaction to proton translocation (for every two electrons transferred, four hydrogen ions are translocated across the cytoplasmic membrane), and thus conserves the redox energy in a proton gradient.</text>
</comment>
<comment type="catalytic activity">
    <reaction evidence="1">
        <text>a quinone + NADH + 5 H(+)(in) = a quinol + NAD(+) + 4 H(+)(out)</text>
        <dbReference type="Rhea" id="RHEA:57888"/>
        <dbReference type="ChEBI" id="CHEBI:15378"/>
        <dbReference type="ChEBI" id="CHEBI:24646"/>
        <dbReference type="ChEBI" id="CHEBI:57540"/>
        <dbReference type="ChEBI" id="CHEBI:57945"/>
        <dbReference type="ChEBI" id="CHEBI:132124"/>
    </reaction>
</comment>
<comment type="cofactor">
    <cofactor evidence="1">
        <name>[4Fe-4S] cluster</name>
        <dbReference type="ChEBI" id="CHEBI:49883"/>
    </cofactor>
    <text evidence="1">Binds 1 [4Fe-4S] cluster.</text>
</comment>
<comment type="subunit">
    <text evidence="1">NDH-1 is composed of 14 different subunits. Subunits NuoB, C, D, E, F, and G constitute the peripheral sector of the complex.</text>
</comment>
<comment type="subcellular location">
    <subcellularLocation>
        <location evidence="1">Cell inner membrane</location>
        <topology evidence="1">Peripheral membrane protein</topology>
        <orientation evidence="1">Cytoplasmic side</orientation>
    </subcellularLocation>
</comment>
<comment type="similarity">
    <text evidence="1">Belongs to the complex I 20 kDa subunit family.</text>
</comment>
<sequence length="169" mass="18292">MGVNQPLGGNVTVTSLDKLVNWVRKSSIWPMTFGLACCAIEMMATGASHNDLDRFGIIFRASPRQADCIIIAGTVTKKMLPVIQTVYEQMPEPKWVIAMGACACSGGIFDTYSVVQGIDEALPVDVYIPGCPPRPEALLYGLMKLQDKIMQESNSFGSVFGLGERVSTV</sequence>
<evidence type="ECO:0000255" key="1">
    <source>
        <dbReference type="HAMAP-Rule" id="MF_01356"/>
    </source>
</evidence>